<proteinExistence type="inferred from homology"/>
<gene>
    <name evidence="1" type="primary">rdgC</name>
    <name type="ordered locus">APL_0161</name>
</gene>
<reference key="1">
    <citation type="journal article" date="2008" name="J. Bacteriol.">
        <title>The complete genome sequence of Actinobacillus pleuropneumoniae L20 (serotype 5b).</title>
        <authorList>
            <person name="Foote S.J."/>
            <person name="Bosse J.T."/>
            <person name="Bouevitch A.B."/>
            <person name="Langford P.R."/>
            <person name="Young N.M."/>
            <person name="Nash J.H.E."/>
        </authorList>
    </citation>
    <scope>NUCLEOTIDE SEQUENCE [LARGE SCALE GENOMIC DNA]</scope>
    <source>
        <strain>L20</strain>
    </source>
</reference>
<comment type="function">
    <text evidence="1">May be involved in recombination.</text>
</comment>
<comment type="subcellular location">
    <subcellularLocation>
        <location evidence="1">Cytoplasm</location>
        <location evidence="1">Nucleoid</location>
    </subcellularLocation>
</comment>
<comment type="similarity">
    <text evidence="1">Belongs to the RdgC family.</text>
</comment>
<accession>A3MYN3</accession>
<feature type="chain" id="PRO_1000021200" description="Recombination-associated protein RdgC">
    <location>
        <begin position="1"/>
        <end position="302"/>
    </location>
</feature>
<name>RDGC_ACTP2</name>
<sequence>MFWFKNVMIYRLTSPLSLESHSLEDQLQQTKFTPCSQSDMSKFGWSSPLSGSELLHFSQSKQFLLVSHKEDKLLPANVIKKETEERIAVLEEKEARKLKKTEKQAIKDDVVAMLLPRAFSKHQFTAIWLDLDAQLVYVDAGSSKRAEDTLALLRKTLGSLPVVPISFALLPSEVMTNWIAKGHTPNWLNLLEEAELKSFDTDSVVRCKRQDLESEEIAQHLQASKFVTKLAIDWENHFSCVLNEDATLSRVKFADEVREKNDDILKEDIAQRFDADLLLMTEELKLFTQKMIEEFGGIKERI</sequence>
<dbReference type="EMBL" id="CP000569">
    <property type="protein sequence ID" value="ABN73269.1"/>
    <property type="molecule type" value="Genomic_DNA"/>
</dbReference>
<dbReference type="RefSeq" id="WP_011848325.1">
    <property type="nucleotide sequence ID" value="NC_009053.1"/>
</dbReference>
<dbReference type="SMR" id="A3MYN3"/>
<dbReference type="STRING" id="416269.APL_0161"/>
<dbReference type="EnsemblBacteria" id="ABN73269">
    <property type="protein sequence ID" value="ABN73269"/>
    <property type="gene ID" value="APL_0161"/>
</dbReference>
<dbReference type="KEGG" id="apl:APL_0161"/>
<dbReference type="PATRIC" id="fig|416269.6.peg.165"/>
<dbReference type="eggNOG" id="COG2974">
    <property type="taxonomic scope" value="Bacteria"/>
</dbReference>
<dbReference type="HOGENOM" id="CLU_052038_1_1_6"/>
<dbReference type="Proteomes" id="UP000001432">
    <property type="component" value="Chromosome"/>
</dbReference>
<dbReference type="GO" id="GO:0043590">
    <property type="term" value="C:bacterial nucleoid"/>
    <property type="evidence" value="ECO:0007669"/>
    <property type="project" value="TreeGrafter"/>
</dbReference>
<dbReference type="GO" id="GO:0005737">
    <property type="term" value="C:cytoplasm"/>
    <property type="evidence" value="ECO:0007669"/>
    <property type="project" value="UniProtKB-UniRule"/>
</dbReference>
<dbReference type="GO" id="GO:0003690">
    <property type="term" value="F:double-stranded DNA binding"/>
    <property type="evidence" value="ECO:0007669"/>
    <property type="project" value="TreeGrafter"/>
</dbReference>
<dbReference type="GO" id="GO:0006310">
    <property type="term" value="P:DNA recombination"/>
    <property type="evidence" value="ECO:0007669"/>
    <property type="project" value="UniProtKB-UniRule"/>
</dbReference>
<dbReference type="GO" id="GO:0000018">
    <property type="term" value="P:regulation of DNA recombination"/>
    <property type="evidence" value="ECO:0007669"/>
    <property type="project" value="TreeGrafter"/>
</dbReference>
<dbReference type="HAMAP" id="MF_00194">
    <property type="entry name" value="RdgC"/>
    <property type="match status" value="1"/>
</dbReference>
<dbReference type="InterPro" id="IPR007476">
    <property type="entry name" value="RdgC"/>
</dbReference>
<dbReference type="NCBIfam" id="NF001462">
    <property type="entry name" value="PRK00321.1-3"/>
    <property type="match status" value="1"/>
</dbReference>
<dbReference type="NCBIfam" id="NF001464">
    <property type="entry name" value="PRK00321.1-5"/>
    <property type="match status" value="1"/>
</dbReference>
<dbReference type="PANTHER" id="PTHR38103">
    <property type="entry name" value="RECOMBINATION-ASSOCIATED PROTEIN RDGC"/>
    <property type="match status" value="1"/>
</dbReference>
<dbReference type="PANTHER" id="PTHR38103:SF1">
    <property type="entry name" value="RECOMBINATION-ASSOCIATED PROTEIN RDGC"/>
    <property type="match status" value="1"/>
</dbReference>
<dbReference type="Pfam" id="PF04381">
    <property type="entry name" value="RdgC"/>
    <property type="match status" value="1"/>
</dbReference>
<keyword id="KW-0963">Cytoplasm</keyword>
<keyword id="KW-0233">DNA recombination</keyword>
<keyword id="KW-1185">Reference proteome</keyword>
<protein>
    <recommendedName>
        <fullName evidence="1">Recombination-associated protein RdgC</fullName>
    </recommendedName>
</protein>
<evidence type="ECO:0000255" key="1">
    <source>
        <dbReference type="HAMAP-Rule" id="MF_00194"/>
    </source>
</evidence>
<organism>
    <name type="scientific">Actinobacillus pleuropneumoniae serotype 5b (strain L20)</name>
    <dbReference type="NCBI Taxonomy" id="416269"/>
    <lineage>
        <taxon>Bacteria</taxon>
        <taxon>Pseudomonadati</taxon>
        <taxon>Pseudomonadota</taxon>
        <taxon>Gammaproteobacteria</taxon>
        <taxon>Pasteurellales</taxon>
        <taxon>Pasteurellaceae</taxon>
        <taxon>Actinobacillus</taxon>
    </lineage>
</organism>